<reference key="1">
    <citation type="journal article" date="1994" name="Eur. J. Biochem.">
        <title>Structures of heat-stable and unstable homologues of the sweet protein mabinlin. The difference in the heat stability is due to replacement of a single amino acid residue.</title>
        <authorList>
            <person name="Nirasawa S."/>
            <person name="Nishino T."/>
            <person name="Katahira M."/>
            <person name="Uesugi S."/>
            <person name="Hu Z."/>
            <person name="Kurihara Y."/>
        </authorList>
    </citation>
    <scope>PROTEIN SEQUENCE</scope>
    <source>
        <tissue>Seed</tissue>
    </source>
</reference>
<organism>
    <name type="scientific">Capparis masaikai</name>
    <name type="common">Mabinlang</name>
    <dbReference type="NCBI Taxonomy" id="13395"/>
    <lineage>
        <taxon>Eukaryota</taxon>
        <taxon>Viridiplantae</taxon>
        <taxon>Streptophyta</taxon>
        <taxon>Embryophyta</taxon>
        <taxon>Tracheophyta</taxon>
        <taxon>Spermatophyta</taxon>
        <taxon>Magnoliopsida</taxon>
        <taxon>eudicotyledons</taxon>
        <taxon>Gunneridae</taxon>
        <taxon>Pentapetalae</taxon>
        <taxon>rosids</taxon>
        <taxon>malvids</taxon>
        <taxon>Brassicales</taxon>
        <taxon>Capparaceae</taxon>
        <taxon>Capparis</taxon>
    </lineage>
</organism>
<feature type="chain" id="PRO_0000032144" description="Sweet protein mabinlin-4 chain A">
    <location>
        <begin position="1"/>
        <end position="28"/>
    </location>
</feature>
<feature type="chain" id="PRO_0000032145" description="Sweet protein mabinlin-4 chain B">
    <location>
        <begin position="29"/>
        <end position="100"/>
    </location>
</feature>
<feature type="disulfide bond" evidence="1">
    <location>
        <begin position="4"/>
        <end position="49"/>
    </location>
</feature>
<feature type="disulfide bond" evidence="1">
    <location>
        <begin position="17"/>
        <end position="38"/>
    </location>
</feature>
<feature type="disulfide bond" evidence="1">
    <location>
        <begin position="39"/>
        <end position="87"/>
    </location>
</feature>
<feature type="disulfide bond" evidence="1">
    <location>
        <begin position="51"/>
        <end position="95"/>
    </location>
</feature>
<feature type="non-consecutive residues" evidence="2">
    <location>
        <begin position="28"/>
        <end position="29"/>
    </location>
</feature>
<dbReference type="PIR" id="S48180">
    <property type="entry name" value="S48180"/>
</dbReference>
<dbReference type="SMR" id="P80353"/>
<dbReference type="GO" id="GO:0045735">
    <property type="term" value="F:nutrient reservoir activity"/>
    <property type="evidence" value="ECO:0007669"/>
    <property type="project" value="UniProtKB-KW"/>
</dbReference>
<dbReference type="CDD" id="cd00261">
    <property type="entry name" value="AAI_SS"/>
    <property type="match status" value="1"/>
</dbReference>
<dbReference type="Gene3D" id="1.10.110.10">
    <property type="entry name" value="Plant lipid-transfer and hydrophobic proteins"/>
    <property type="match status" value="1"/>
</dbReference>
<dbReference type="InterPro" id="IPR036312">
    <property type="entry name" value="Bifun_inhib/LTP/seed_sf"/>
</dbReference>
<dbReference type="InterPro" id="IPR016140">
    <property type="entry name" value="Bifunc_inhib/LTP/seed_store"/>
</dbReference>
<dbReference type="InterPro" id="IPR000617">
    <property type="entry name" value="Napin/2SS/CON"/>
</dbReference>
<dbReference type="PANTHER" id="PTHR35496">
    <property type="entry name" value="2S SEED STORAGE PROTEIN 1-RELATED"/>
    <property type="match status" value="1"/>
</dbReference>
<dbReference type="PANTHER" id="PTHR35496:SF20">
    <property type="entry name" value="2S SEED STORAGE PROTEIN 1-RELATED"/>
    <property type="match status" value="1"/>
</dbReference>
<dbReference type="Pfam" id="PF00234">
    <property type="entry name" value="Tryp_alpha_amyl"/>
    <property type="match status" value="1"/>
</dbReference>
<dbReference type="PRINTS" id="PR00496">
    <property type="entry name" value="NAPIN"/>
</dbReference>
<dbReference type="SMART" id="SM00499">
    <property type="entry name" value="AAI"/>
    <property type="match status" value="1"/>
</dbReference>
<dbReference type="SUPFAM" id="SSF47699">
    <property type="entry name" value="Bifunctional inhibitor/lipid-transfer protein/seed storage 2S albumin"/>
    <property type="match status" value="1"/>
</dbReference>
<comment type="function">
    <text>Heat stable 2S seed storage protein having sweetness-inducing activity.</text>
</comment>
<comment type="subunit">
    <text>Heterodimer of a small A and a large B chain linked by disulfide bonds.</text>
</comment>
<comment type="similarity">
    <text evidence="2">Belongs to the 2S seed storage albumins family.</text>
</comment>
<evidence type="ECO:0000250" key="1"/>
<evidence type="ECO:0000305" key="2"/>
<proteinExistence type="evidence at protein level"/>
<keyword id="KW-0903">Direct protein sequencing</keyword>
<keyword id="KW-1015">Disulfide bond</keyword>
<keyword id="KW-0708">Seed storage protein</keyword>
<keyword id="KW-0758">Storage protein</keyword>
<keyword id="KW-0776">Taste-modifying protein</keyword>
<protein>
    <recommendedName>
        <fullName>Sweet protein mabinlin-4</fullName>
    </recommendedName>
    <alternativeName>
        <fullName>Mabinlin IV</fullName>
        <shortName>MAB IV</shortName>
    </alternativeName>
    <component>
        <recommendedName>
            <fullName>Sweet protein mabinlin-4 chain A</fullName>
        </recommendedName>
    </component>
    <component>
        <recommendedName>
            <fullName>Sweet protein mabinlin-4 chain B</fullName>
        </recommendedName>
    </component>
</protein>
<name>2SS4_CAPMA</name>
<sequence length="100" mass="11928">EPLCRRQFQQHQHLRACQRYLRRRAQRGEQRGPALRLCCNQLRQVNKPCVCPVLRQAAHQQLYQGQIEGPRQVRRLFRAARNLPNICKIPAVGRCQFTRW</sequence>
<accession>P80353</accession>